<organism>
    <name type="scientific">Thermotoga sp. (strain RQ2)</name>
    <dbReference type="NCBI Taxonomy" id="126740"/>
    <lineage>
        <taxon>Bacteria</taxon>
        <taxon>Thermotogati</taxon>
        <taxon>Thermotogota</taxon>
        <taxon>Thermotogae</taxon>
        <taxon>Thermotogales</taxon>
        <taxon>Thermotogaceae</taxon>
        <taxon>Thermotoga</taxon>
    </lineage>
</organism>
<reference key="1">
    <citation type="journal article" date="2011" name="J. Bacteriol.">
        <title>Genome sequence of Thermotoga sp. strain RQ2, a hyperthermophilic bacterium isolated from a geothermally heated region of the seafloor near Ribeira Quente, the Azores.</title>
        <authorList>
            <person name="Swithers K.S."/>
            <person name="DiPippo J.L."/>
            <person name="Bruce D.C."/>
            <person name="Detter C."/>
            <person name="Tapia R."/>
            <person name="Han S."/>
            <person name="Saunders E."/>
            <person name="Goodwin L.A."/>
            <person name="Han J."/>
            <person name="Woyke T."/>
            <person name="Pitluck S."/>
            <person name="Pennacchio L."/>
            <person name="Nolan M."/>
            <person name="Mikhailova N."/>
            <person name="Lykidis A."/>
            <person name="Land M.L."/>
            <person name="Brettin T."/>
            <person name="Stetter K.O."/>
            <person name="Nelson K.E."/>
            <person name="Gogarten J.P."/>
            <person name="Noll K.M."/>
        </authorList>
    </citation>
    <scope>NUCLEOTIDE SEQUENCE [LARGE SCALE GENOMIC DNA]</scope>
    <source>
        <strain>RQ2</strain>
    </source>
</reference>
<accession>B1L935</accession>
<name>RPOB_THESQ</name>
<dbReference type="EC" id="2.7.7.6" evidence="1"/>
<dbReference type="EMBL" id="CP000969">
    <property type="protein sequence ID" value="ACB08833.1"/>
    <property type="molecule type" value="Genomic_DNA"/>
</dbReference>
<dbReference type="RefSeq" id="WP_012310570.1">
    <property type="nucleotide sequence ID" value="NC_010483.1"/>
</dbReference>
<dbReference type="SMR" id="B1L935"/>
<dbReference type="KEGG" id="trq:TRQ2_0477"/>
<dbReference type="HOGENOM" id="CLU_000524_4_0_0"/>
<dbReference type="Proteomes" id="UP000001687">
    <property type="component" value="Chromosome"/>
</dbReference>
<dbReference type="GO" id="GO:0000428">
    <property type="term" value="C:DNA-directed RNA polymerase complex"/>
    <property type="evidence" value="ECO:0007669"/>
    <property type="project" value="UniProtKB-KW"/>
</dbReference>
<dbReference type="GO" id="GO:0003677">
    <property type="term" value="F:DNA binding"/>
    <property type="evidence" value="ECO:0007669"/>
    <property type="project" value="UniProtKB-UniRule"/>
</dbReference>
<dbReference type="GO" id="GO:0003899">
    <property type="term" value="F:DNA-directed RNA polymerase activity"/>
    <property type="evidence" value="ECO:0007669"/>
    <property type="project" value="UniProtKB-UniRule"/>
</dbReference>
<dbReference type="GO" id="GO:0032549">
    <property type="term" value="F:ribonucleoside binding"/>
    <property type="evidence" value="ECO:0007669"/>
    <property type="project" value="InterPro"/>
</dbReference>
<dbReference type="GO" id="GO:0006351">
    <property type="term" value="P:DNA-templated transcription"/>
    <property type="evidence" value="ECO:0007669"/>
    <property type="project" value="UniProtKB-UniRule"/>
</dbReference>
<dbReference type="CDD" id="cd00653">
    <property type="entry name" value="RNA_pol_B_RPB2"/>
    <property type="match status" value="1"/>
</dbReference>
<dbReference type="Gene3D" id="2.40.50.100">
    <property type="match status" value="1"/>
</dbReference>
<dbReference type="Gene3D" id="2.40.50.150">
    <property type="match status" value="1"/>
</dbReference>
<dbReference type="Gene3D" id="3.90.1100.10">
    <property type="match status" value="2"/>
</dbReference>
<dbReference type="Gene3D" id="2.30.150.10">
    <property type="entry name" value="DNA-directed RNA polymerase, beta subunit, external 1 domain"/>
    <property type="match status" value="1"/>
</dbReference>
<dbReference type="Gene3D" id="2.40.270.10">
    <property type="entry name" value="DNA-directed RNA polymerase, subunit 2, domain 6"/>
    <property type="match status" value="1"/>
</dbReference>
<dbReference type="Gene3D" id="3.90.1800.10">
    <property type="entry name" value="RNA polymerase alpha subunit dimerisation domain"/>
    <property type="match status" value="1"/>
</dbReference>
<dbReference type="Gene3D" id="3.90.1110.10">
    <property type="entry name" value="RNA polymerase Rpb2, domain 2"/>
    <property type="match status" value="3"/>
</dbReference>
<dbReference type="HAMAP" id="MF_01321">
    <property type="entry name" value="RNApol_bact_RpoB"/>
    <property type="match status" value="1"/>
</dbReference>
<dbReference type="InterPro" id="IPR042107">
    <property type="entry name" value="DNA-dir_RNA_pol_bsu_ext_1_sf"/>
</dbReference>
<dbReference type="InterPro" id="IPR019462">
    <property type="entry name" value="DNA-dir_RNA_pol_bsu_external_1"/>
</dbReference>
<dbReference type="InterPro" id="IPR015712">
    <property type="entry name" value="DNA-dir_RNA_pol_su2"/>
</dbReference>
<dbReference type="InterPro" id="IPR007120">
    <property type="entry name" value="DNA-dir_RNAP_su2_dom"/>
</dbReference>
<dbReference type="InterPro" id="IPR037033">
    <property type="entry name" value="DNA-dir_RNAP_su2_hyb_sf"/>
</dbReference>
<dbReference type="InterPro" id="IPR010243">
    <property type="entry name" value="RNA_pol_bsu_bac"/>
</dbReference>
<dbReference type="InterPro" id="IPR007121">
    <property type="entry name" value="RNA_pol_bsu_CS"/>
</dbReference>
<dbReference type="InterPro" id="IPR007644">
    <property type="entry name" value="RNA_pol_bsu_protrusion"/>
</dbReference>
<dbReference type="InterPro" id="IPR037034">
    <property type="entry name" value="RNA_pol_Rpb2_2_sf"/>
</dbReference>
<dbReference type="InterPro" id="IPR007645">
    <property type="entry name" value="RNA_pol_Rpb2_3"/>
</dbReference>
<dbReference type="InterPro" id="IPR007641">
    <property type="entry name" value="RNA_pol_Rpb2_7"/>
</dbReference>
<dbReference type="InterPro" id="IPR014724">
    <property type="entry name" value="RNA_pol_RPB2_OB-fold"/>
</dbReference>
<dbReference type="NCBIfam" id="NF001616">
    <property type="entry name" value="PRK00405.1"/>
    <property type="match status" value="1"/>
</dbReference>
<dbReference type="NCBIfam" id="TIGR02013">
    <property type="entry name" value="rpoB"/>
    <property type="match status" value="1"/>
</dbReference>
<dbReference type="PANTHER" id="PTHR20856">
    <property type="entry name" value="DNA-DIRECTED RNA POLYMERASE I SUBUNIT 2"/>
    <property type="match status" value="1"/>
</dbReference>
<dbReference type="Pfam" id="PF04563">
    <property type="entry name" value="RNA_pol_Rpb2_1"/>
    <property type="match status" value="1"/>
</dbReference>
<dbReference type="Pfam" id="PF04565">
    <property type="entry name" value="RNA_pol_Rpb2_3"/>
    <property type="match status" value="1"/>
</dbReference>
<dbReference type="Pfam" id="PF10385">
    <property type="entry name" value="RNA_pol_Rpb2_45"/>
    <property type="match status" value="1"/>
</dbReference>
<dbReference type="Pfam" id="PF00562">
    <property type="entry name" value="RNA_pol_Rpb2_6"/>
    <property type="match status" value="1"/>
</dbReference>
<dbReference type="Pfam" id="PF04560">
    <property type="entry name" value="RNA_pol_Rpb2_7"/>
    <property type="match status" value="1"/>
</dbReference>
<dbReference type="SUPFAM" id="SSF64484">
    <property type="entry name" value="beta and beta-prime subunits of DNA dependent RNA-polymerase"/>
    <property type="match status" value="1"/>
</dbReference>
<dbReference type="PROSITE" id="PS01166">
    <property type="entry name" value="RNA_POL_BETA"/>
    <property type="match status" value="1"/>
</dbReference>
<proteinExistence type="inferred from homology"/>
<comment type="function">
    <text evidence="1">DNA-dependent RNA polymerase catalyzes the transcription of DNA into RNA using the four ribonucleoside triphosphates as substrates.</text>
</comment>
<comment type="catalytic activity">
    <reaction evidence="1">
        <text>RNA(n) + a ribonucleoside 5'-triphosphate = RNA(n+1) + diphosphate</text>
        <dbReference type="Rhea" id="RHEA:21248"/>
        <dbReference type="Rhea" id="RHEA-COMP:14527"/>
        <dbReference type="Rhea" id="RHEA-COMP:17342"/>
        <dbReference type="ChEBI" id="CHEBI:33019"/>
        <dbReference type="ChEBI" id="CHEBI:61557"/>
        <dbReference type="ChEBI" id="CHEBI:140395"/>
        <dbReference type="EC" id="2.7.7.6"/>
    </reaction>
</comment>
<comment type="subunit">
    <text evidence="1">The RNAP catalytic core consists of 2 alpha, 1 beta, 1 beta' and 1 omega subunit. When a sigma factor is associated with the core the holoenzyme is formed, which can initiate transcription.</text>
</comment>
<comment type="similarity">
    <text evidence="1">Belongs to the RNA polymerase beta chain family.</text>
</comment>
<protein>
    <recommendedName>
        <fullName evidence="1">DNA-directed RNA polymerase subunit beta</fullName>
        <shortName evidence="1">RNAP subunit beta</shortName>
        <ecNumber evidence="1">2.7.7.6</ecNumber>
    </recommendedName>
    <alternativeName>
        <fullName evidence="1">RNA polymerase subunit beta</fullName>
    </alternativeName>
    <alternativeName>
        <fullName evidence="1">Transcriptase subunit beta</fullName>
    </alternativeName>
</protein>
<feature type="chain" id="PRO_1000141746" description="DNA-directed RNA polymerase subunit beta">
    <location>
        <begin position="1"/>
        <end position="1263"/>
    </location>
</feature>
<evidence type="ECO:0000255" key="1">
    <source>
        <dbReference type="HAMAP-Rule" id="MF_01321"/>
    </source>
</evidence>
<gene>
    <name evidence="1" type="primary">rpoB</name>
    <name type="ordered locus">TRQ2_0477</name>
</gene>
<sequence length="1263" mass="143191">MKEISCGRRTRVSFGKSREPLPIPDLVEIQKISYRRFLEEGLLEVLKKFSPIYSQATRSDLKKSDRGFALEFVSTRIGEPVVDPLECKAKGLTYSVPIYATARLTDMKSGEMKEEEVFLGYIPYMTDRGTFIINGAERVVVNQIVVSPGLYFSSEYIDREEYGGYFLPSRGAWLEVILDPYDGVLYAGLDGKKVNLFLFLKTIGYEKDEDILSLYPTYLDADDEDSLLLHVGSILLEDIYDGDRKIAEKWDILTKDLAERILMIDDINQIKIVHPIAQNTFEKMLELVSSSGEEGEEEEEKTKIYGLNEVTVVDAYLEIFRRLRPEELPRINAAKRYLHDLFFNPERYDLSEVGRYKVNERLRNAYIRYLIEVEGEDPEEARKKVYNETSLVLKPLDIVLASRILFDYFERRYVNDFEIDSYELKNLIRIFKEEYLEKRKTAPYDLRKLVSVFRRNYGVTSDLGVFAAIRYVSNINKELPSIPFDTKDHLGNKRVRTVGELVQREFERLFARAQKAIQERLTLINSLSKVSIQSLINIKSIISTVNQFFAMNQLSQFMDQVNPLSELTHKRRVSAVGPGGLRRESKVFEARNVHYSQYGRLCPIETPEGANIGFITSLAIYAKIDEYGFLMTPYRKVVNGKVTDEVVYLRANEEEEYKIIPATTPVDEEGNIIPERVVARMGEDIRLVPKEEVDFMDVSTKQPFSVSASLIPFLEHDDASRALMGSNMQRQAVPLLKTEAPLVGTGMEWEAAKNSGYVVLAEHDGIVKEVDAARVVVHRTDENGNLMYDDKGNPVVDEYRLLKFVRSNQDTMINQKPIVNEGDFVKKGDPIADGPATDMGELALGRNILVAFMPWEGYNYEDAILVSQELLEEDVFTSIHIEVYETQARETRLGPEEITADIPNVSKELLKNLDENGIIRVGAYVVSDYGVGSQAILVGKVTPKGEGDTTPEEKIIRSVFGERGRDVKDTSLRLPHGVEGRVIRVDVYDQNDIAELGAGVLKLVRVYVASRKTLDIGDKLAGRHGNKGVVSNILPKEDMPFLPDGTPVQMVLNPLGIPSRMNVGQILETHLGWLAKLTGKWFATPVFEGAKEDEILRPLYEERKKRGLHLGDDENNPNGKVVLRDGRTGEPFDNPVVVGYMYMLKLIHIAKEKIHARSTGPYSLIHQQPLGGKSHFGGQRLGEMEVWALEAYGAAHTLAEMLTIKSDDIKGRNEAYKAILKNMNIPEPGVPESFRVLIKELRGLALDVRLYDENGNEIDIDKY</sequence>
<keyword id="KW-0240">DNA-directed RNA polymerase</keyword>
<keyword id="KW-0548">Nucleotidyltransferase</keyword>
<keyword id="KW-0804">Transcription</keyword>
<keyword id="KW-0808">Transferase</keyword>